<reference key="1">
    <citation type="journal article" date="1997" name="Nature">
        <title>The complete genome sequence of the Gram-positive bacterium Bacillus subtilis.</title>
        <authorList>
            <person name="Kunst F."/>
            <person name="Ogasawara N."/>
            <person name="Moszer I."/>
            <person name="Albertini A.M."/>
            <person name="Alloni G."/>
            <person name="Azevedo V."/>
            <person name="Bertero M.G."/>
            <person name="Bessieres P."/>
            <person name="Bolotin A."/>
            <person name="Borchert S."/>
            <person name="Borriss R."/>
            <person name="Boursier L."/>
            <person name="Brans A."/>
            <person name="Braun M."/>
            <person name="Brignell S.C."/>
            <person name="Bron S."/>
            <person name="Brouillet S."/>
            <person name="Bruschi C.V."/>
            <person name="Caldwell B."/>
            <person name="Capuano V."/>
            <person name="Carter N.M."/>
            <person name="Choi S.-K."/>
            <person name="Codani J.-J."/>
            <person name="Connerton I.F."/>
            <person name="Cummings N.J."/>
            <person name="Daniel R.A."/>
            <person name="Denizot F."/>
            <person name="Devine K.M."/>
            <person name="Duesterhoeft A."/>
            <person name="Ehrlich S.D."/>
            <person name="Emmerson P.T."/>
            <person name="Entian K.-D."/>
            <person name="Errington J."/>
            <person name="Fabret C."/>
            <person name="Ferrari E."/>
            <person name="Foulger D."/>
            <person name="Fritz C."/>
            <person name="Fujita M."/>
            <person name="Fujita Y."/>
            <person name="Fuma S."/>
            <person name="Galizzi A."/>
            <person name="Galleron N."/>
            <person name="Ghim S.-Y."/>
            <person name="Glaser P."/>
            <person name="Goffeau A."/>
            <person name="Golightly E.J."/>
            <person name="Grandi G."/>
            <person name="Guiseppi G."/>
            <person name="Guy B.J."/>
            <person name="Haga K."/>
            <person name="Haiech J."/>
            <person name="Harwood C.R."/>
            <person name="Henaut A."/>
            <person name="Hilbert H."/>
            <person name="Holsappel S."/>
            <person name="Hosono S."/>
            <person name="Hullo M.-F."/>
            <person name="Itaya M."/>
            <person name="Jones L.-M."/>
            <person name="Joris B."/>
            <person name="Karamata D."/>
            <person name="Kasahara Y."/>
            <person name="Klaerr-Blanchard M."/>
            <person name="Klein C."/>
            <person name="Kobayashi Y."/>
            <person name="Koetter P."/>
            <person name="Koningstein G."/>
            <person name="Krogh S."/>
            <person name="Kumano M."/>
            <person name="Kurita K."/>
            <person name="Lapidus A."/>
            <person name="Lardinois S."/>
            <person name="Lauber J."/>
            <person name="Lazarevic V."/>
            <person name="Lee S.-M."/>
            <person name="Levine A."/>
            <person name="Liu H."/>
            <person name="Masuda S."/>
            <person name="Mauel C."/>
            <person name="Medigue C."/>
            <person name="Medina N."/>
            <person name="Mellado R.P."/>
            <person name="Mizuno M."/>
            <person name="Moestl D."/>
            <person name="Nakai S."/>
            <person name="Noback M."/>
            <person name="Noone D."/>
            <person name="O'Reilly M."/>
            <person name="Ogawa K."/>
            <person name="Ogiwara A."/>
            <person name="Oudega B."/>
            <person name="Park S.-H."/>
            <person name="Parro V."/>
            <person name="Pohl T.M."/>
            <person name="Portetelle D."/>
            <person name="Porwollik S."/>
            <person name="Prescott A.M."/>
            <person name="Presecan E."/>
            <person name="Pujic P."/>
            <person name="Purnelle B."/>
            <person name="Rapoport G."/>
            <person name="Rey M."/>
            <person name="Reynolds S."/>
            <person name="Rieger M."/>
            <person name="Rivolta C."/>
            <person name="Rocha E."/>
            <person name="Roche B."/>
            <person name="Rose M."/>
            <person name="Sadaie Y."/>
            <person name="Sato T."/>
            <person name="Scanlan E."/>
            <person name="Schleich S."/>
            <person name="Schroeter R."/>
            <person name="Scoffone F."/>
            <person name="Sekiguchi J."/>
            <person name="Sekowska A."/>
            <person name="Seror S.J."/>
            <person name="Serror P."/>
            <person name="Shin B.-S."/>
            <person name="Soldo B."/>
            <person name="Sorokin A."/>
            <person name="Tacconi E."/>
            <person name="Takagi T."/>
            <person name="Takahashi H."/>
            <person name="Takemaru K."/>
            <person name="Takeuchi M."/>
            <person name="Tamakoshi A."/>
            <person name="Tanaka T."/>
            <person name="Terpstra P."/>
            <person name="Tognoni A."/>
            <person name="Tosato V."/>
            <person name="Uchiyama S."/>
            <person name="Vandenbol M."/>
            <person name="Vannier F."/>
            <person name="Vassarotti A."/>
            <person name="Viari A."/>
            <person name="Wambutt R."/>
            <person name="Wedler E."/>
            <person name="Wedler H."/>
            <person name="Weitzenegger T."/>
            <person name="Winters P."/>
            <person name="Wipat A."/>
            <person name="Yamamoto H."/>
            <person name="Yamane K."/>
            <person name="Yasumoto K."/>
            <person name="Yata K."/>
            <person name="Yoshida K."/>
            <person name="Yoshikawa H.-F."/>
            <person name="Zumstein E."/>
            <person name="Yoshikawa H."/>
            <person name="Danchin A."/>
        </authorList>
    </citation>
    <scope>NUCLEOTIDE SEQUENCE [LARGE SCALE GENOMIC DNA]</scope>
    <source>
        <strain>168</strain>
    </source>
</reference>
<reference key="2">
    <citation type="journal article" date="2009" name="Microbiology">
        <title>CpgA, EF-Tu and the stressosome protein YezB are substrates of the Ser/Thr kinase/phosphatase couple, PrkC/PrpC, in Bacillus subtilis.</title>
        <authorList>
            <person name="Absalon C."/>
            <person name="Obuchowski M."/>
            <person name="Madec E."/>
            <person name="Delattre D."/>
            <person name="Holland I.B."/>
            <person name="Seror S.J."/>
        </authorList>
    </citation>
    <scope>PHOSPHORYLATION</scope>
    <scope>SUBCELLULAR LOCATION</scope>
    <source>
        <strain>168</strain>
    </source>
</reference>
<dbReference type="EMBL" id="AL009126">
    <property type="protein sequence ID" value="CAB12537.2"/>
    <property type="molecule type" value="Genomic_DNA"/>
</dbReference>
<dbReference type="PIR" id="G69799">
    <property type="entry name" value="G69799"/>
</dbReference>
<dbReference type="SMR" id="O31537"/>
<dbReference type="FunCoup" id="O31537">
    <property type="interactions" value="185"/>
</dbReference>
<dbReference type="InParanoid" id="O31537"/>
<dbReference type="Proteomes" id="UP000001570">
    <property type="component" value="Chromosome"/>
</dbReference>
<dbReference type="GO" id="GO:0005737">
    <property type="term" value="C:cytoplasm"/>
    <property type="evidence" value="ECO:0007669"/>
    <property type="project" value="UniProtKB-SubCell"/>
</dbReference>
<dbReference type="CDD" id="cd07041">
    <property type="entry name" value="STAS_RsbR_RsbS_like"/>
    <property type="match status" value="1"/>
</dbReference>
<dbReference type="Gene3D" id="3.30.750.24">
    <property type="entry name" value="STAS domain"/>
    <property type="match status" value="1"/>
</dbReference>
<dbReference type="InterPro" id="IPR051932">
    <property type="entry name" value="Bact_StressResp_Reg"/>
</dbReference>
<dbReference type="InterPro" id="IPR002645">
    <property type="entry name" value="STAS_dom"/>
</dbReference>
<dbReference type="InterPro" id="IPR036513">
    <property type="entry name" value="STAS_dom_sf"/>
</dbReference>
<dbReference type="PANTHER" id="PTHR33745">
    <property type="entry name" value="RSBT ANTAGONIST PROTEIN RSBS-RELATED"/>
    <property type="match status" value="1"/>
</dbReference>
<dbReference type="PANTHER" id="PTHR33745:SF3">
    <property type="entry name" value="RSBT CO-ANTAGONIST PROTEIN RSBRC"/>
    <property type="match status" value="1"/>
</dbReference>
<dbReference type="Pfam" id="PF01740">
    <property type="entry name" value="STAS"/>
    <property type="match status" value="1"/>
</dbReference>
<dbReference type="SUPFAM" id="SSF52091">
    <property type="entry name" value="SpoIIaa-like"/>
    <property type="match status" value="1"/>
</dbReference>
<dbReference type="PROSITE" id="PS50801">
    <property type="entry name" value="STAS"/>
    <property type="match status" value="1"/>
</dbReference>
<organism>
    <name type="scientific">Bacillus subtilis (strain 168)</name>
    <dbReference type="NCBI Taxonomy" id="224308"/>
    <lineage>
        <taxon>Bacteria</taxon>
        <taxon>Bacillati</taxon>
        <taxon>Bacillota</taxon>
        <taxon>Bacilli</taxon>
        <taxon>Bacillales</taxon>
        <taxon>Bacillaceae</taxon>
        <taxon>Bacillus</taxon>
    </lineage>
</organism>
<sequence length="98" mass="10894">MLETVPVRCVERKITSLVVDLSGVPIVDTMVAQQLYNLSKTLFLLGVKAVFSGIRPDVAQTSIQLGLDFSEYETYGTLKQALENMGVRCIVEELEENK</sequence>
<name>YEZB_BACSU</name>
<gene>
    <name type="primary">yezB</name>
    <name type="synonym">yetI</name>
    <name type="ordered locus">BSU07180</name>
</gene>
<proteinExistence type="evidence at protein level"/>
<protein>
    <recommendedName>
        <fullName>Uncharacterized protein YezB</fullName>
    </recommendedName>
</protein>
<feature type="chain" id="PRO_0000379773" description="Uncharacterized protein YezB">
    <location>
        <begin position="1"/>
        <end position="98"/>
    </location>
</feature>
<feature type="domain" description="STAS" evidence="1">
    <location>
        <begin position="1"/>
        <end position="85"/>
    </location>
</feature>
<comment type="subcellular location">
    <subcellularLocation>
        <location evidence="2">Cytoplasm</location>
    </subcellularLocation>
</comment>
<comment type="PTM">
    <text evidence="2">Phosphorylated on threonine residue(s). Phosphorylated by PrkC and dephosphorylated by PrpC.</text>
</comment>
<keyword id="KW-0963">Cytoplasm</keyword>
<keyword id="KW-0597">Phosphoprotein</keyword>
<keyword id="KW-1185">Reference proteome</keyword>
<evidence type="ECO:0000255" key="1">
    <source>
        <dbReference type="PROSITE-ProRule" id="PRU00198"/>
    </source>
</evidence>
<evidence type="ECO:0000269" key="2">
    <source>
    </source>
</evidence>
<accession>O31537</accession>